<keyword id="KW-0963">Cytoplasm</keyword>
<keyword id="KW-0251">Elongation factor</keyword>
<keyword id="KW-0342">GTP-binding</keyword>
<keyword id="KW-0547">Nucleotide-binding</keyword>
<keyword id="KW-0648">Protein biosynthesis</keyword>
<proteinExistence type="inferred from homology"/>
<name>EF2_PYRIL</name>
<comment type="function">
    <text evidence="1">Catalyzes the GTP-dependent ribosomal translocation step during translation elongation. During this step, the ribosome changes from the pre-translocational (PRE) to the post-translocational (POST) state as the newly formed A-site-bound peptidyl-tRNA and P-site-bound deacylated tRNA move to the P and E sites, respectively. Catalyzes the coordinated movement of the two tRNA molecules, the mRNA and conformational changes in the ribosome.</text>
</comment>
<comment type="subcellular location">
    <subcellularLocation>
        <location evidence="1">Cytoplasm</location>
    </subcellularLocation>
</comment>
<comment type="similarity">
    <text evidence="1">Belongs to the TRAFAC class translation factor GTPase superfamily. Classic translation factor GTPase family. EF-G/EF-2 subfamily.</text>
</comment>
<sequence length="740" mass="83051">MSSAVRIVEKQLDEILAIARNPAQIRNAGTLAHVDHGKTTTTDSLLMGAGLLSPKVAGKALAMDYVPIEQLRQMTVKAANISLYFEYGGKPYLINFVDTPGHVDFTGHVTRSLRVMDGGLVVVDAVEGVMTQTETVVRQALEEYVRPVLFINKIDRLIKELRLSPQEIQQRILTIVKDFNALIEMFAPPEFKDKWKIDPGKGQMAMGSALHKWGITIPMAQKAGIKFSNIIDAYEKGYVDQLAQEFPLYKTLLSMIIEHVPPPNVAQKYRIPRLWRGDLNSEVGKALLEADPNGPTVIAVSKVNKDPHAGLIVTGRVFSGTIREGDEIYIIGRKMKKKVLQTYIYMGPSRIIVPYMPAGNIVALMGVDEARAGDTLVDPRISDIPPFEKMRYIAEPVVTVAIEPKNPAELAKLVEALKDLVIEDPTLDLKIDQETGQILLSGVGTLHLEIATWLLKERSKTEFTVSPPLIRFRETVRERSQVWEGKSPNKHNRLYFYVEPLDETTIELIATKEITEDQDPRERAKILREKAGWDTDEARGIWAIDDRYFNVIVDKTSGIQYLREIRDYIVQGFRWATEAGPLAQEPIRGVKVVLVDAVVHEDPAHRGPAQIMPATKNAIFAAMLSAKPTVLEPLLRLDIKVAPDYIGAVTSVLNKHRGKILDMTQQEYMAYLRAELPVLESFTISDELRAAAAGKIFWSMQFSRWAPVPESMLLDLVKQLRKKKGLKEEIPKPTDFVEVY</sequence>
<protein>
    <recommendedName>
        <fullName evidence="1">Elongation factor 2</fullName>
        <shortName evidence="1">EF-2</shortName>
    </recommendedName>
</protein>
<feature type="chain" id="PRO_0000335861" description="Elongation factor 2">
    <location>
        <begin position="1"/>
        <end position="740"/>
    </location>
</feature>
<feature type="domain" description="tr-type G">
    <location>
        <begin position="23"/>
        <end position="264"/>
    </location>
</feature>
<feature type="binding site" evidence="1">
    <location>
        <begin position="32"/>
        <end position="39"/>
    </location>
    <ligand>
        <name>GTP</name>
        <dbReference type="ChEBI" id="CHEBI:37565"/>
    </ligand>
</feature>
<feature type="binding site" evidence="1">
    <location>
        <begin position="98"/>
        <end position="102"/>
    </location>
    <ligand>
        <name>GTP</name>
        <dbReference type="ChEBI" id="CHEBI:37565"/>
    </ligand>
</feature>
<feature type="binding site" evidence="1">
    <location>
        <begin position="152"/>
        <end position="155"/>
    </location>
    <ligand>
        <name>GTP</name>
        <dbReference type="ChEBI" id="CHEBI:37565"/>
    </ligand>
</feature>
<feature type="modified residue" description="Diphthamide" evidence="1">
    <location>
        <position position="605"/>
    </location>
</feature>
<organism>
    <name type="scientific">Pyrobaculum islandicum (strain DSM 4184 / JCM 9189 / GEO3)</name>
    <dbReference type="NCBI Taxonomy" id="384616"/>
    <lineage>
        <taxon>Archaea</taxon>
        <taxon>Thermoproteota</taxon>
        <taxon>Thermoprotei</taxon>
        <taxon>Thermoproteales</taxon>
        <taxon>Thermoproteaceae</taxon>
        <taxon>Pyrobaculum</taxon>
    </lineage>
</organism>
<accession>A1RVX2</accession>
<gene>
    <name evidence="1" type="primary">fusA</name>
    <name type="ordered locus">Pisl_1957</name>
</gene>
<evidence type="ECO:0000255" key="1">
    <source>
        <dbReference type="HAMAP-Rule" id="MF_00054"/>
    </source>
</evidence>
<dbReference type="EMBL" id="CP000504">
    <property type="protein sequence ID" value="ABL89104.1"/>
    <property type="molecule type" value="Genomic_DNA"/>
</dbReference>
<dbReference type="RefSeq" id="WP_011763679.1">
    <property type="nucleotide sequence ID" value="NC_008701.1"/>
</dbReference>
<dbReference type="SMR" id="A1RVX2"/>
<dbReference type="STRING" id="384616.Pisl_1957"/>
<dbReference type="GeneID" id="4616286"/>
<dbReference type="KEGG" id="pis:Pisl_1957"/>
<dbReference type="eggNOG" id="arCOG01559">
    <property type="taxonomic scope" value="Archaea"/>
</dbReference>
<dbReference type="HOGENOM" id="CLU_002794_11_1_2"/>
<dbReference type="OrthoDB" id="6290at2157"/>
<dbReference type="Proteomes" id="UP000002595">
    <property type="component" value="Chromosome"/>
</dbReference>
<dbReference type="GO" id="GO:0005829">
    <property type="term" value="C:cytosol"/>
    <property type="evidence" value="ECO:0007669"/>
    <property type="project" value="TreeGrafter"/>
</dbReference>
<dbReference type="GO" id="GO:1990904">
    <property type="term" value="C:ribonucleoprotein complex"/>
    <property type="evidence" value="ECO:0007669"/>
    <property type="project" value="TreeGrafter"/>
</dbReference>
<dbReference type="GO" id="GO:0005525">
    <property type="term" value="F:GTP binding"/>
    <property type="evidence" value="ECO:0007669"/>
    <property type="project" value="UniProtKB-UniRule"/>
</dbReference>
<dbReference type="GO" id="GO:0003924">
    <property type="term" value="F:GTPase activity"/>
    <property type="evidence" value="ECO:0007669"/>
    <property type="project" value="InterPro"/>
</dbReference>
<dbReference type="GO" id="GO:0003746">
    <property type="term" value="F:translation elongation factor activity"/>
    <property type="evidence" value="ECO:0007669"/>
    <property type="project" value="UniProtKB-UniRule"/>
</dbReference>
<dbReference type="CDD" id="cd01681">
    <property type="entry name" value="aeEF2_snRNP_like_IV"/>
    <property type="match status" value="1"/>
</dbReference>
<dbReference type="CDD" id="cd01885">
    <property type="entry name" value="EF2"/>
    <property type="match status" value="1"/>
</dbReference>
<dbReference type="CDD" id="cd16268">
    <property type="entry name" value="EF2_II"/>
    <property type="match status" value="1"/>
</dbReference>
<dbReference type="CDD" id="cd16261">
    <property type="entry name" value="EF2_snRNP_III"/>
    <property type="match status" value="1"/>
</dbReference>
<dbReference type="CDD" id="cd01514">
    <property type="entry name" value="Elongation_Factor_C"/>
    <property type="match status" value="1"/>
</dbReference>
<dbReference type="FunFam" id="3.30.230.10:FF:000009">
    <property type="entry name" value="116 kDa U5 small nuclear ribonucleoprotein component"/>
    <property type="match status" value="1"/>
</dbReference>
<dbReference type="FunFam" id="3.30.70.240:FF:000010">
    <property type="entry name" value="Elongation factor 2"/>
    <property type="match status" value="1"/>
</dbReference>
<dbReference type="FunFam" id="3.30.70.870:FF:000002">
    <property type="entry name" value="Translation elongation factor 2"/>
    <property type="match status" value="1"/>
</dbReference>
<dbReference type="Gene3D" id="3.30.230.10">
    <property type="match status" value="1"/>
</dbReference>
<dbReference type="Gene3D" id="3.30.70.240">
    <property type="match status" value="1"/>
</dbReference>
<dbReference type="Gene3D" id="3.30.70.870">
    <property type="entry name" value="Elongation Factor G (Translational Gtpase), domain 3"/>
    <property type="match status" value="1"/>
</dbReference>
<dbReference type="Gene3D" id="3.40.50.300">
    <property type="entry name" value="P-loop containing nucleotide triphosphate hydrolases"/>
    <property type="match status" value="1"/>
</dbReference>
<dbReference type="Gene3D" id="2.40.30.10">
    <property type="entry name" value="Translation factors"/>
    <property type="match status" value="1"/>
</dbReference>
<dbReference type="HAMAP" id="MF_00054_A">
    <property type="entry name" value="EF_G_EF_2_A"/>
    <property type="match status" value="1"/>
</dbReference>
<dbReference type="InterPro" id="IPR041095">
    <property type="entry name" value="EFG_II"/>
</dbReference>
<dbReference type="InterPro" id="IPR035647">
    <property type="entry name" value="EFG_III/V"/>
</dbReference>
<dbReference type="InterPro" id="IPR000640">
    <property type="entry name" value="EFG_V-like"/>
</dbReference>
<dbReference type="InterPro" id="IPR004161">
    <property type="entry name" value="EFTu-like_2"/>
</dbReference>
<dbReference type="InterPro" id="IPR027417">
    <property type="entry name" value="P-loop_NTPase"/>
</dbReference>
<dbReference type="InterPro" id="IPR020568">
    <property type="entry name" value="Ribosomal_Su5_D2-typ_SF"/>
</dbReference>
<dbReference type="InterPro" id="IPR014721">
    <property type="entry name" value="Ribsml_uS5_D2-typ_fold_subgr"/>
</dbReference>
<dbReference type="InterPro" id="IPR005225">
    <property type="entry name" value="Small_GTP-bd"/>
</dbReference>
<dbReference type="InterPro" id="IPR000795">
    <property type="entry name" value="T_Tr_GTP-bd_dom"/>
</dbReference>
<dbReference type="InterPro" id="IPR009000">
    <property type="entry name" value="Transl_B-barrel_sf"/>
</dbReference>
<dbReference type="InterPro" id="IPR004543">
    <property type="entry name" value="Transl_elong_EFG/EF2_arc"/>
</dbReference>
<dbReference type="InterPro" id="IPR005517">
    <property type="entry name" value="Transl_elong_EFG/EF2_IV"/>
</dbReference>
<dbReference type="NCBIfam" id="TIGR00490">
    <property type="entry name" value="aEF-2"/>
    <property type="match status" value="1"/>
</dbReference>
<dbReference type="NCBIfam" id="TIGR00231">
    <property type="entry name" value="small_GTP"/>
    <property type="match status" value="1"/>
</dbReference>
<dbReference type="PANTHER" id="PTHR42908:SF3">
    <property type="entry name" value="ELONGATION FACTOR-LIKE GTPASE 1"/>
    <property type="match status" value="1"/>
</dbReference>
<dbReference type="PANTHER" id="PTHR42908">
    <property type="entry name" value="TRANSLATION ELONGATION FACTOR-RELATED"/>
    <property type="match status" value="1"/>
</dbReference>
<dbReference type="Pfam" id="PF00679">
    <property type="entry name" value="EFG_C"/>
    <property type="match status" value="1"/>
</dbReference>
<dbReference type="Pfam" id="PF14492">
    <property type="entry name" value="EFG_III"/>
    <property type="match status" value="1"/>
</dbReference>
<dbReference type="Pfam" id="PF03764">
    <property type="entry name" value="EFG_IV"/>
    <property type="match status" value="1"/>
</dbReference>
<dbReference type="Pfam" id="PF00009">
    <property type="entry name" value="GTP_EFTU"/>
    <property type="match status" value="1"/>
</dbReference>
<dbReference type="Pfam" id="PF03144">
    <property type="entry name" value="GTP_EFTU_D2"/>
    <property type="match status" value="1"/>
</dbReference>
<dbReference type="PRINTS" id="PR00315">
    <property type="entry name" value="ELONGATNFCT"/>
</dbReference>
<dbReference type="SMART" id="SM00838">
    <property type="entry name" value="EFG_C"/>
    <property type="match status" value="1"/>
</dbReference>
<dbReference type="SMART" id="SM00889">
    <property type="entry name" value="EFG_IV"/>
    <property type="match status" value="1"/>
</dbReference>
<dbReference type="SUPFAM" id="SSF54980">
    <property type="entry name" value="EF-G C-terminal domain-like"/>
    <property type="match status" value="2"/>
</dbReference>
<dbReference type="SUPFAM" id="SSF52540">
    <property type="entry name" value="P-loop containing nucleoside triphosphate hydrolases"/>
    <property type="match status" value="1"/>
</dbReference>
<dbReference type="SUPFAM" id="SSF54211">
    <property type="entry name" value="Ribosomal protein S5 domain 2-like"/>
    <property type="match status" value="1"/>
</dbReference>
<dbReference type="SUPFAM" id="SSF50447">
    <property type="entry name" value="Translation proteins"/>
    <property type="match status" value="1"/>
</dbReference>
<dbReference type="PROSITE" id="PS51722">
    <property type="entry name" value="G_TR_2"/>
    <property type="match status" value="1"/>
</dbReference>
<reference key="1">
    <citation type="submission" date="2006-12" db="EMBL/GenBank/DDBJ databases">
        <title>Complete sequence of Pyrobaculum islandicum DSM 4184.</title>
        <authorList>
            <person name="Copeland A."/>
            <person name="Lucas S."/>
            <person name="Lapidus A."/>
            <person name="Barry K."/>
            <person name="Detter J.C."/>
            <person name="Glavina del Rio T."/>
            <person name="Dalin E."/>
            <person name="Tice H."/>
            <person name="Pitluck S."/>
            <person name="Meincke L."/>
            <person name="Brettin T."/>
            <person name="Bruce D."/>
            <person name="Han C."/>
            <person name="Tapia R."/>
            <person name="Gilna P."/>
            <person name="Schmutz J."/>
            <person name="Larimer F."/>
            <person name="Land M."/>
            <person name="Hauser L."/>
            <person name="Kyrpides N."/>
            <person name="Mikhailova N."/>
            <person name="Cozen A.E."/>
            <person name="Fitz-Gibbon S.T."/>
            <person name="House C.H."/>
            <person name="Saltikov C."/>
            <person name="Lowe T."/>
            <person name="Richardson P."/>
        </authorList>
    </citation>
    <scope>NUCLEOTIDE SEQUENCE [LARGE SCALE GENOMIC DNA]</scope>
    <source>
        <strain>DSM 4184 / JCM 9189 / GEO3</strain>
    </source>
</reference>